<comment type="function">
    <text>Participates in various redox reactions through the reversible oxidation of its active center dithiol to a disulfide and catalyzes dithiol-disulfide exchange reactions.</text>
</comment>
<comment type="similarity">
    <text evidence="2">Belongs to the thioredoxin family.</text>
</comment>
<sequence>MVKVVSAENFNSFIATGLVLIDFFAEWCGPCKMLTPVLESLEAEVSSVLIGKVNIDDHPAPAEQYGVSSIPTLILFKDGKEVDRVVGLKDKDSLIRLINQHS</sequence>
<protein>
    <recommendedName>
        <fullName>Thioredoxin</fullName>
        <shortName>Trx</shortName>
    </recommendedName>
</protein>
<gene>
    <name type="primary">trxA</name>
    <name type="synonym">trx</name>
    <name type="ordered locus">CCA_00080</name>
</gene>
<reference key="1">
    <citation type="journal article" date="1996" name="Microbiology">
        <title>A 28 kDa major immunogen of Chlamydia psittaci shares identity with Mip proteins of Legionella spp. and Chlamydia trachomatis-cloning and characterization of the C. psittaci mip-like gene.</title>
        <authorList>
            <person name="Rockey D.D."/>
            <person name="Chesebro B.B."/>
            <person name="Heinzen R.A."/>
            <person name="Hackstadt T."/>
        </authorList>
    </citation>
    <scope>NUCLEOTIDE SEQUENCE [GENOMIC DNA]</scope>
    <source>
        <strain>ATCC VR-813 / DSM 19441 / 03DC25 / GPIC</strain>
    </source>
</reference>
<reference key="2">
    <citation type="journal article" date="2003" name="Nucleic Acids Res.">
        <title>Genome sequence of Chlamydophila caviae (Chlamydia psittaci GPIC): examining the role of niche-specific genes in the evolution of the Chlamydiaceae.</title>
        <authorList>
            <person name="Read T.D."/>
            <person name="Myers G.S.A."/>
            <person name="Brunham R.C."/>
            <person name="Nelson W.C."/>
            <person name="Paulsen I.T."/>
            <person name="Heidelberg J.F."/>
            <person name="Holtzapple E.K."/>
            <person name="Khouri H.M."/>
            <person name="Federova N.B."/>
            <person name="Carty H.A."/>
            <person name="Umayam L.A."/>
            <person name="Haft D.H."/>
            <person name="Peterson J.D."/>
            <person name="Beanan M.J."/>
            <person name="White O."/>
            <person name="Salzberg S.L."/>
            <person name="Hsia R.-C."/>
            <person name="McClarty G."/>
            <person name="Rank R.G."/>
            <person name="Bavoil P.M."/>
            <person name="Fraser C.M."/>
        </authorList>
    </citation>
    <scope>NUCLEOTIDE SEQUENCE [LARGE SCALE GENOMIC DNA]</scope>
    <source>
        <strain>ATCC VR-813 / DSM 19441 / 03DC25 / GPIC</strain>
    </source>
</reference>
<proteinExistence type="inferred from homology"/>
<name>THIO_CHLCV</name>
<accession>P52227</accession>
<evidence type="ECO:0000255" key="1">
    <source>
        <dbReference type="PROSITE-ProRule" id="PRU00691"/>
    </source>
</evidence>
<evidence type="ECO:0000305" key="2"/>
<organism>
    <name type="scientific">Chlamydia caviae (strain ATCC VR-813 / DSM 19441 / 03DC25 / GPIC)</name>
    <name type="common">Chlamydophila caviae</name>
    <dbReference type="NCBI Taxonomy" id="227941"/>
    <lineage>
        <taxon>Bacteria</taxon>
        <taxon>Pseudomonadati</taxon>
        <taxon>Chlamydiota</taxon>
        <taxon>Chlamydiia</taxon>
        <taxon>Chlamydiales</taxon>
        <taxon>Chlamydiaceae</taxon>
        <taxon>Chlamydia/Chlamydophila group</taxon>
        <taxon>Chlamydia</taxon>
    </lineage>
</organism>
<dbReference type="EMBL" id="L39892">
    <property type="protein sequence ID" value="AAB41348.1"/>
    <property type="molecule type" value="Genomic_DNA"/>
</dbReference>
<dbReference type="EMBL" id="AE015925">
    <property type="protein sequence ID" value="AAP04832.1"/>
    <property type="molecule type" value="Genomic_DNA"/>
</dbReference>
<dbReference type="RefSeq" id="WP_011006053.1">
    <property type="nucleotide sequence ID" value="NC_003361.3"/>
</dbReference>
<dbReference type="SMR" id="P52227"/>
<dbReference type="STRING" id="227941.CCA_00080"/>
<dbReference type="KEGG" id="cca:CCA_00080"/>
<dbReference type="eggNOG" id="COG3118">
    <property type="taxonomic scope" value="Bacteria"/>
</dbReference>
<dbReference type="HOGENOM" id="CLU_090389_10_4_0"/>
<dbReference type="OrthoDB" id="9790390at2"/>
<dbReference type="Proteomes" id="UP000002193">
    <property type="component" value="Chromosome"/>
</dbReference>
<dbReference type="GO" id="GO:0005829">
    <property type="term" value="C:cytosol"/>
    <property type="evidence" value="ECO:0007669"/>
    <property type="project" value="TreeGrafter"/>
</dbReference>
<dbReference type="GO" id="GO:0015035">
    <property type="term" value="F:protein-disulfide reductase activity"/>
    <property type="evidence" value="ECO:0007669"/>
    <property type="project" value="InterPro"/>
</dbReference>
<dbReference type="GO" id="GO:0045454">
    <property type="term" value="P:cell redox homeostasis"/>
    <property type="evidence" value="ECO:0007669"/>
    <property type="project" value="TreeGrafter"/>
</dbReference>
<dbReference type="CDD" id="cd02947">
    <property type="entry name" value="TRX_family"/>
    <property type="match status" value="1"/>
</dbReference>
<dbReference type="FunFam" id="3.40.30.10:FF:000001">
    <property type="entry name" value="Thioredoxin"/>
    <property type="match status" value="1"/>
</dbReference>
<dbReference type="Gene3D" id="3.40.30.10">
    <property type="entry name" value="Glutaredoxin"/>
    <property type="match status" value="1"/>
</dbReference>
<dbReference type="InterPro" id="IPR005746">
    <property type="entry name" value="Thioredoxin"/>
</dbReference>
<dbReference type="InterPro" id="IPR036249">
    <property type="entry name" value="Thioredoxin-like_sf"/>
</dbReference>
<dbReference type="InterPro" id="IPR017937">
    <property type="entry name" value="Thioredoxin_CS"/>
</dbReference>
<dbReference type="InterPro" id="IPR013766">
    <property type="entry name" value="Thioredoxin_domain"/>
</dbReference>
<dbReference type="NCBIfam" id="TIGR01068">
    <property type="entry name" value="thioredoxin"/>
    <property type="match status" value="1"/>
</dbReference>
<dbReference type="PANTHER" id="PTHR45663">
    <property type="entry name" value="GEO12009P1"/>
    <property type="match status" value="1"/>
</dbReference>
<dbReference type="PANTHER" id="PTHR45663:SF11">
    <property type="entry name" value="GEO12009P1"/>
    <property type="match status" value="1"/>
</dbReference>
<dbReference type="Pfam" id="PF00085">
    <property type="entry name" value="Thioredoxin"/>
    <property type="match status" value="1"/>
</dbReference>
<dbReference type="PIRSF" id="PIRSF000077">
    <property type="entry name" value="Thioredoxin"/>
    <property type="match status" value="1"/>
</dbReference>
<dbReference type="PRINTS" id="PR00421">
    <property type="entry name" value="THIOREDOXIN"/>
</dbReference>
<dbReference type="SUPFAM" id="SSF52833">
    <property type="entry name" value="Thioredoxin-like"/>
    <property type="match status" value="1"/>
</dbReference>
<dbReference type="PROSITE" id="PS00194">
    <property type="entry name" value="THIOREDOXIN_1"/>
    <property type="match status" value="1"/>
</dbReference>
<dbReference type="PROSITE" id="PS51352">
    <property type="entry name" value="THIOREDOXIN_2"/>
    <property type="match status" value="1"/>
</dbReference>
<keyword id="KW-1015">Disulfide bond</keyword>
<keyword id="KW-0249">Electron transport</keyword>
<keyword id="KW-0676">Redox-active center</keyword>
<keyword id="KW-0813">Transport</keyword>
<feature type="chain" id="PRO_0000120082" description="Thioredoxin">
    <location>
        <begin position="1"/>
        <end position="102"/>
    </location>
</feature>
<feature type="domain" description="Thioredoxin" evidence="1">
    <location>
        <begin position="1"/>
        <end position="102"/>
    </location>
</feature>
<feature type="disulfide bond" description="Redox-active" evidence="1">
    <location>
        <begin position="28"/>
        <end position="31"/>
    </location>
</feature>